<comment type="function">
    <text evidence="1">S1 region attaches the virion to the cell membrane by interacting with host ANPEP/aminopeptidase N, initiating the infection. Binding to the receptor probably induces conformational changes in the S glycoprotein unmasking the fusion peptide of S2 region and activating membranes fusion. S2 region belongs to the class I viral fusion protein. Under the current model, the protein has at least 3 conformational states: pre-fusion native state, pre-hairpin intermediate state, and post-fusion hairpin state. During viral and target cell membrane fusion, the coiled coil regions (heptad repeats) regions assume a trimer-of-hairpins structure, positioning the fusion peptide in close proximity to the C-terminal region of the ectodomain. The formation of this structure appears to drive apposition and subsequent fusion of viral and target cell membranes.</text>
</comment>
<comment type="subunit">
    <text evidence="1 4 5">Homotrimer. During virus morphogenesis, found in a complex with M and HE proteins. Interacts with host ANPEP.</text>
</comment>
<comment type="subcellular location">
    <subcellularLocation>
        <location evidence="1">Virion membrane</location>
        <topology evidence="1">Single-pass type I membrane protein</topology>
    </subcellularLocation>
    <subcellularLocation>
        <location evidence="1">Host endoplasmic reticulum-Golgi intermediate compartment membrane</location>
        <topology evidence="1">Single-pass type I membrane protein</topology>
    </subcellularLocation>
    <text evidence="1">Accumulates in the endoplasmic reticulum-Golgi intermediate compartment, where it participates in virus particle assembly.</text>
</comment>
<comment type="domain">
    <text evidence="1">The KxHxx motif seems to function as an ER retrieval signal.</text>
</comment>
<comment type="similarity">
    <text evidence="1">Belongs to the alphacoronaviruses spike protein family.</text>
</comment>
<comment type="caution">
    <text evidence="1">In contrast to beta- and gammacoronaviruses, S glycoprotein is not cleaved into S1 and S2.</text>
</comment>
<proteinExistence type="evidence at protein level"/>
<gene>
    <name evidence="1" type="primary">S</name>
    <name type="ORF">2</name>
</gene>
<accession>P07946</accession>
<accession>Q02167</accession>
<accession>Q9IW04</accession>
<sequence>MKKLFVVLVVMPLIYGDNFPCSKLTNRTIGNQWNLIETFLLNYSSRLPPNSDVVLGDYFPTVQPWFNCIRNNSNDLYVTLENLKALYWDYATENITWNHRQRLNVVVNGYPYSITVTTTRNFNSAEGAIICICKGSPPTTTTESSLTCNWGSECRLNHKFPICPSNSEANCGNMLYGLQWFADEVVAYLHGASYRISFENQWSGTVTFGDMRATTLEVAGTLVDLWWFNPVYDVSYYRVNNKNGTTVVSNCTDQCASYVANVFTTQPGGFIPSDFSFNNWFLLTNSSTLVSGKLVTKQPLLVNCLWPVPSFEEAASTFCFEGAGFDQCNGAVLNNTVDVIRFNLNFTTNVQSGKGATVFSLNTTGGVTLEISCYTVSDSSFFSYGEIPFGVTDGPRYCYVHYNGTALKYLGTLPPSVKEIAISKWGHFYINGYNFFSTFPIDCISFNLTTGDSDVFWTIAYTSYTEALVQVENTAITKVTYCNSHVNNIKCSQITANLNNGFYPVSSSEVGLVNKSVVLLPSFYTHTIVNITIGLGMKRSGYGQPIASTLSNITLPMQDHNTDVYCIRSDQFSVYVHSTCKSALWDNIFKRNCTDVLDATAVIKTGTCPFSFDKLNNYLTFNKFCLSLSPVGANCKFDVAARTRTNEQVVRSLYVIYEEGDNIVGVPSDNSGVHDLSVLHLDSCTDYNIYGRTGVGIIRQTNRTLLSGLYYTSLSGDLLGFKNVSDGVIYSVTPCDVSAQAAVIDGTIVGAITSINSELLGLTHWTTTPNFYYYSIYNYTNDRTRGTAIDSNDVDCEPVITYSNIGVCKNGAFVFINVTHSDGDVQPISTGNVTIPTNFTISVQVEYIQVYTTPVSIDCSRYVCNGNPRCNKLLTQYVSACQTIEQALAMGARLENMEVDSMLFVSENALKLASVEAFNSSETLDPIYKEWPNIGGSWLEGLKYILPSHNSKRKYRSAIEDLLFDKVVTSGLGTVDEDYKRCTGGYDIADLVCAQYYNGIMVLPGVANADKMTMYTASLAGGITLGALGGGAVAIPFAVAVQARLNYVALQTDVLNKNQQILASAFNQAIGNITQSFGKVNDAIHQTSRGLATVAKALAKVQDVVNIQGQALSHLTVQLQNNFQAISSSISDIYNRLDELSADAQVDRLITGRLTALNAFVSQTLTRQAEVRASRQLAKDKVNECVRSQSQRFGFCGNGTHLFSLANAAPNGMIFFHTVLLPTAYETVTAWPGICASDGDRTFGLVVKDVQLTLFRNLDDKFYLTPRTMYQPRVATSSDFVQIEGCDVLFVNATVSDLPSIIPDYIDINQTVQDILENFRPNWTVPELTFDIFNATYLNLTGEIDDLEFRSEKLHNTTVELAILIDNINNTLVNLEWLNRIETYVKWPWYVWLLIGLVVIFCIPLLLFCCCSTGCCGCIGCLGSCCHSICSRRQFENYEPIEKVHVH</sequence>
<feature type="signal peptide" evidence="1">
    <location>
        <begin position="1"/>
        <end position="28"/>
    </location>
</feature>
<feature type="chain" id="PRO_0000037225" description="Spike glycoprotein" evidence="1">
    <location>
        <begin position="29"/>
        <end position="1447"/>
    </location>
</feature>
<feature type="topological domain" description="Virion surface" evidence="1">
    <location>
        <begin position="29"/>
        <end position="1388"/>
    </location>
</feature>
<feature type="transmembrane region" description="Helical" evidence="1">
    <location>
        <begin position="1389"/>
        <end position="1408"/>
    </location>
</feature>
<feature type="topological domain" description="Intravirion" evidence="1">
    <location>
        <begin position="1409"/>
        <end position="1447"/>
    </location>
</feature>
<feature type="region of interest" description="S1">
    <location>
        <begin position="17"/>
        <end position="774"/>
    </location>
</feature>
<feature type="region of interest" description="S1" evidence="1">
    <location>
        <begin position="29"/>
        <end position="774"/>
    </location>
</feature>
<feature type="region of interest" description="Interaction with host ANPEP" evidence="1">
    <location>
        <begin position="655"/>
        <end position="799"/>
    </location>
</feature>
<feature type="region of interest" description="S2" evidence="1">
    <location>
        <begin position="775"/>
        <end position="1447"/>
    </location>
</feature>
<feature type="region of interest" description="Fusion peptide" evidence="1">
    <location>
        <begin position="1020"/>
        <end position="1041"/>
    </location>
</feature>
<feature type="region of interest" description="Heptad repeat 1 (HR1)" evidence="2">
    <location>
        <begin position="1035"/>
        <end position="1154"/>
    </location>
</feature>
<feature type="region of interest" description="Heptad repeat 2 (HR2)" evidence="3">
    <location>
        <begin position="1303"/>
        <end position="1400"/>
    </location>
</feature>
<feature type="coiled-coil region" evidence="1">
    <location>
        <begin position="1102"/>
        <end position="1146"/>
    </location>
</feature>
<feature type="coiled-coil region" evidence="1">
    <location>
        <begin position="1336"/>
        <end position="1378"/>
    </location>
</feature>
<feature type="short sequence motif" description="KxHxx" evidence="1">
    <location>
        <begin position="1443"/>
        <end position="1447"/>
    </location>
</feature>
<feature type="sequence variant" description="In strain: Isolate PUR46-MAD.">
    <original>N</original>
    <variation>D</variation>
    <location>
        <position position="72"/>
    </location>
</feature>
<feature type="sequence conflict" description="In Ref. 1; CAA29175." ref="1">
    <original>V</original>
    <variation>D</variation>
    <location>
        <position position="53"/>
    </location>
</feature>
<feature type="sequence conflict" description="In Ref. 2; AAA47911." ref="2">
    <original>L</original>
    <variation>V</variation>
    <location>
        <position position="86"/>
    </location>
</feature>
<feature type="sequence conflict" description="In Ref. 1; CAA29175." ref="1">
    <original>L</original>
    <variation>I</variation>
    <location>
        <position position="706"/>
    </location>
</feature>
<feature type="sequence conflict" description="In Ref. 2; AAA47911." ref="2">
    <original>V</original>
    <variation>F</variation>
    <location>
        <position position="794"/>
    </location>
</feature>
<evidence type="ECO:0000255" key="1">
    <source>
        <dbReference type="HAMAP-Rule" id="MF_04200"/>
    </source>
</evidence>
<evidence type="ECO:0000255" key="2">
    <source>
        <dbReference type="PROSITE-ProRule" id="PRU01271"/>
    </source>
</evidence>
<evidence type="ECO:0000255" key="3">
    <source>
        <dbReference type="PROSITE-ProRule" id="PRU01272"/>
    </source>
</evidence>
<evidence type="ECO:0000269" key="4">
    <source>
    </source>
</evidence>
<evidence type="ECO:0000269" key="5">
    <source>
    </source>
</evidence>
<protein>
    <recommendedName>
        <fullName evidence="1">Spike glycoprotein</fullName>
        <shortName evidence="1">S glycoprotein</shortName>
    </recommendedName>
    <alternativeName>
        <fullName evidence="1">E2</fullName>
    </alternativeName>
    <alternativeName>
        <fullName evidence="1">Peplomer protein</fullName>
    </alternativeName>
</protein>
<reference key="1">
    <citation type="journal article" date="1987" name="J. Gen. Virol.">
        <title>The predicted primary structure of the peplomer protein E2 of the porcine coronavirus transmissible gastroenteritis virus.</title>
        <authorList>
            <person name="Rasschaert D."/>
            <person name="Laude H."/>
        </authorList>
    </citation>
    <scope>NUCLEOTIDE SEQUENCE [GENOMIC RNA]</scope>
</reference>
<reference key="2">
    <citation type="journal article" date="1987" name="Virus Res.">
        <title>The nucleotide sequence of the peplomer gene of porcine transmissible gastroenteritis virus (TGEV): comparison with the sequence of the peplomer protein of feline infectious peritonitis virus (FIPV).</title>
        <authorList>
            <person name="Jacobs L."/>
            <person name="de Groot R.J."/>
            <person name="van der Zeijst B.A.M."/>
            <person name="Horzinek M.C."/>
            <person name="Spaan W.J.M."/>
        </authorList>
    </citation>
    <scope>NUCLEOTIDE SEQUENCE [GENOMIC RNA]</scope>
</reference>
<reference key="3">
    <citation type="journal article" date="1992" name="Virology">
        <title>Genetic evolution and tropism of transmissible gastroenteritis coronaviruses.</title>
        <authorList>
            <person name="Sanchez C.M."/>
            <person name="Gebauer F."/>
            <person name="Sune C."/>
            <person name="Mendez A."/>
            <person name="Dopazo J."/>
            <person name="Enjuanes L."/>
        </authorList>
    </citation>
    <scope>NUCLEOTIDE SEQUENCE [GENOMIC RNA]</scope>
    <source>
        <strain>Isolate PUR46-MAD</strain>
    </source>
</reference>
<reference key="4">
    <citation type="journal article" date="2000" name="Proc. Natl. Acad. Sci. U.S.A.">
        <title>Engineering the largest RNA virus genome as an infectious bacterial artificial chromosome.</title>
        <authorList>
            <person name="Almazan F."/>
            <person name="Gonzalez J.M."/>
            <person name="Penzes Z."/>
            <person name="Izeta A."/>
            <person name="Calvo E."/>
            <person name="Plana-Duran J."/>
            <person name="Enjuanes L."/>
        </authorList>
    </citation>
    <scope>NUCLEOTIDE SEQUENCE [GENOMIC RNA]</scope>
    <source>
        <strain>Isolate PUR46-MAD</strain>
    </source>
</reference>
<reference key="5">
    <citation type="journal article" date="1990" name="J. Virol.">
        <title>Assembly of coronavirus spike protein into trimers and its role in epitope expression.</title>
        <authorList>
            <person name="Delmas B."/>
            <person name="Laude H."/>
        </authorList>
    </citation>
    <scope>HOMOTRIMERIZATION</scope>
</reference>
<reference key="6">
    <citation type="journal article" date="1992" name="Nature">
        <title>Aminopeptidase N is a major receptor for the entero-pathogenic coronavirus TGEV.</title>
        <authorList>
            <person name="Delmas B."/>
            <person name="Gelfi J."/>
            <person name="L'Haridon R."/>
            <person name="Vogel L.K."/>
            <person name="Sjostrom H."/>
            <person name="Noren O."/>
            <person name="Laude H."/>
        </authorList>
    </citation>
    <scope>INTERACTION WITH PORCINE ANPEP</scope>
</reference>
<reference key="7">
    <citation type="journal article" date="1996" name="J. Virol.">
        <title>Feline aminopeptidase N serves as a receptor for feline, canine, porcine, and human coronaviruses in serogroup I.</title>
        <authorList>
            <person name="Tresnan D.B."/>
            <person name="Levis R."/>
            <person name="Holmes K.V."/>
        </authorList>
    </citation>
    <scope>INTERACTION WITH FELINE ANPEP</scope>
</reference>
<organismHost>
    <name type="scientific">Sus scrofa</name>
    <name type="common">Pig</name>
    <dbReference type="NCBI Taxonomy" id="9823"/>
</organismHost>
<dbReference type="EMBL" id="X05695">
    <property type="protein sequence ID" value="CAA29175.1"/>
    <property type="molecule type" value="Genomic_RNA"/>
</dbReference>
<dbReference type="EMBL" id="M21950">
    <property type="protein sequence ID" value="AAA47911.1"/>
    <property type="molecule type" value="Genomic_RNA"/>
</dbReference>
<dbReference type="EMBL" id="M94101">
    <property type="protein sequence ID" value="AAA47109.1"/>
    <property type="molecule type" value="Genomic_RNA"/>
</dbReference>
<dbReference type="EMBL" id="AJ271965">
    <property type="protein sequence ID" value="CAB91145.1"/>
    <property type="molecule type" value="Genomic_RNA"/>
</dbReference>
<dbReference type="PIR" id="A27106">
    <property type="entry name" value="VGIHE2"/>
</dbReference>
<dbReference type="SMR" id="P07946"/>
<dbReference type="Proteomes" id="UP000001440">
    <property type="component" value="Segment"/>
</dbReference>
<dbReference type="GO" id="GO:0044173">
    <property type="term" value="C:host cell endoplasmic reticulum-Golgi intermediate compartment membrane"/>
    <property type="evidence" value="ECO:0007669"/>
    <property type="project" value="UniProtKB-SubCell"/>
</dbReference>
<dbReference type="GO" id="GO:0016020">
    <property type="term" value="C:membrane"/>
    <property type="evidence" value="ECO:0007669"/>
    <property type="project" value="UniProtKB-UniRule"/>
</dbReference>
<dbReference type="GO" id="GO:0019031">
    <property type="term" value="C:viral envelope"/>
    <property type="evidence" value="ECO:0007669"/>
    <property type="project" value="UniProtKB-UniRule"/>
</dbReference>
<dbReference type="GO" id="GO:0055036">
    <property type="term" value="C:virion membrane"/>
    <property type="evidence" value="ECO:0007669"/>
    <property type="project" value="UniProtKB-SubCell"/>
</dbReference>
<dbReference type="GO" id="GO:0075509">
    <property type="term" value="P:endocytosis involved in viral entry into host cell"/>
    <property type="evidence" value="ECO:0007669"/>
    <property type="project" value="UniProtKB-UniRule"/>
</dbReference>
<dbReference type="GO" id="GO:0039654">
    <property type="term" value="P:fusion of virus membrane with host endosome membrane"/>
    <property type="evidence" value="ECO:0007669"/>
    <property type="project" value="UniProtKB-UniRule"/>
</dbReference>
<dbReference type="GO" id="GO:0019064">
    <property type="term" value="P:fusion of virus membrane with host plasma membrane"/>
    <property type="evidence" value="ECO:0007669"/>
    <property type="project" value="UniProtKB-UniRule"/>
</dbReference>
<dbReference type="GO" id="GO:0046813">
    <property type="term" value="P:receptor-mediated virion attachment to host cell"/>
    <property type="evidence" value="ECO:0007669"/>
    <property type="project" value="UniProtKB-UniRule"/>
</dbReference>
<dbReference type="CDD" id="cd22377">
    <property type="entry name" value="TGEV-like_Spike_SD1-2_S1-S2_S2"/>
    <property type="match status" value="1"/>
</dbReference>
<dbReference type="Gene3D" id="1.20.5.300">
    <property type="match status" value="2"/>
</dbReference>
<dbReference type="Gene3D" id="2.60.40.3130">
    <property type="match status" value="1"/>
</dbReference>
<dbReference type="HAMAP" id="MF_04200">
    <property type="entry name" value="ALPHA_CORONA_SPIKE"/>
    <property type="match status" value="1"/>
</dbReference>
<dbReference type="InterPro" id="IPR042552">
    <property type="entry name" value="ALPHA_CORONA_SPIKE"/>
</dbReference>
<dbReference type="InterPro" id="IPR043607">
    <property type="entry name" value="CoV_S1_C"/>
</dbReference>
<dbReference type="InterPro" id="IPR043473">
    <property type="entry name" value="S2_sf_CoV"/>
</dbReference>
<dbReference type="InterPro" id="IPR002551">
    <property type="entry name" value="Spike_S1_CoV"/>
</dbReference>
<dbReference type="InterPro" id="IPR002552">
    <property type="entry name" value="Spike_S2_CoV"/>
</dbReference>
<dbReference type="InterPro" id="IPR043614">
    <property type="entry name" value="Spike_S2_CoV_C"/>
</dbReference>
<dbReference type="InterPro" id="IPR044873">
    <property type="entry name" value="Spike_S2_CoV_HR1"/>
</dbReference>
<dbReference type="InterPro" id="IPR044874">
    <property type="entry name" value="Spike_S2_CoV_HR2"/>
</dbReference>
<dbReference type="Pfam" id="PF01600">
    <property type="entry name" value="CoV_S1"/>
    <property type="match status" value="1"/>
</dbReference>
<dbReference type="Pfam" id="PF19209">
    <property type="entry name" value="CoV_S1_C"/>
    <property type="match status" value="1"/>
</dbReference>
<dbReference type="Pfam" id="PF01601">
    <property type="entry name" value="CoV_S2"/>
    <property type="match status" value="1"/>
</dbReference>
<dbReference type="Pfam" id="PF19214">
    <property type="entry name" value="CoV_S2_C"/>
    <property type="match status" value="1"/>
</dbReference>
<dbReference type="SUPFAM" id="SSF111474">
    <property type="entry name" value="Coronavirus S2 glycoprotein"/>
    <property type="match status" value="2"/>
</dbReference>
<dbReference type="PROSITE" id="PS51923">
    <property type="entry name" value="COV_S2_HR1"/>
    <property type="match status" value="1"/>
</dbReference>
<dbReference type="PROSITE" id="PS51924">
    <property type="entry name" value="COV_S2_HR2"/>
    <property type="match status" value="1"/>
</dbReference>
<keyword id="KW-0175">Coiled coil</keyword>
<keyword id="KW-0325">Glycoprotein</keyword>
<keyword id="KW-1043">Host membrane</keyword>
<keyword id="KW-0945">Host-virus interaction</keyword>
<keyword id="KW-0472">Membrane</keyword>
<keyword id="KW-1185">Reference proteome</keyword>
<keyword id="KW-0732">Signal</keyword>
<keyword id="KW-0812">Transmembrane</keyword>
<keyword id="KW-1133">Transmembrane helix</keyword>
<keyword id="KW-1161">Viral attachment to host cell</keyword>
<keyword id="KW-0261">Viral envelope protein</keyword>
<keyword id="KW-0946">Virion</keyword>
<keyword id="KW-0843">Virulence</keyword>
<keyword id="KW-1160">Virus entry into host cell</keyword>
<name>SPIKE_CVPPU</name>
<organism>
    <name type="scientific">Porcine transmissible gastroenteritis coronavirus (strain Purdue)</name>
    <name type="common">TGEV</name>
    <dbReference type="NCBI Taxonomy" id="11151"/>
    <lineage>
        <taxon>Viruses</taxon>
        <taxon>Riboviria</taxon>
        <taxon>Orthornavirae</taxon>
        <taxon>Pisuviricota</taxon>
        <taxon>Pisoniviricetes</taxon>
        <taxon>Nidovirales</taxon>
        <taxon>Cornidovirineae</taxon>
        <taxon>Coronaviridae</taxon>
        <taxon>Orthocoronavirinae</taxon>
        <taxon>Alphacoronavirus</taxon>
        <taxon>Tegacovirus</taxon>
        <taxon>Alphacoronavirus 1</taxon>
    </lineage>
</organism>